<dbReference type="EC" id="6.1.1.18" evidence="1"/>
<dbReference type="EMBL" id="BA000003">
    <property type="protein sequence ID" value="BAB13113.1"/>
    <property type="molecule type" value="Genomic_DNA"/>
</dbReference>
<dbReference type="RefSeq" id="NP_240227.1">
    <property type="nucleotide sequence ID" value="NC_002528.1"/>
</dbReference>
<dbReference type="RefSeq" id="WP_010896103.1">
    <property type="nucleotide sequence ID" value="NC_002528.1"/>
</dbReference>
<dbReference type="SMR" id="P57490"/>
<dbReference type="STRING" id="563178.BUAP5A_408"/>
<dbReference type="EnsemblBacteria" id="BAB13113">
    <property type="protein sequence ID" value="BAB13113"/>
    <property type="gene ID" value="BAB13113"/>
</dbReference>
<dbReference type="KEGG" id="buc:BU415"/>
<dbReference type="PATRIC" id="fig|107806.10.peg.424"/>
<dbReference type="eggNOG" id="COG0008">
    <property type="taxonomic scope" value="Bacteria"/>
</dbReference>
<dbReference type="HOGENOM" id="CLU_001882_2_3_6"/>
<dbReference type="Proteomes" id="UP000001806">
    <property type="component" value="Chromosome"/>
</dbReference>
<dbReference type="GO" id="GO:0005829">
    <property type="term" value="C:cytosol"/>
    <property type="evidence" value="ECO:0007669"/>
    <property type="project" value="TreeGrafter"/>
</dbReference>
<dbReference type="GO" id="GO:0005524">
    <property type="term" value="F:ATP binding"/>
    <property type="evidence" value="ECO:0007669"/>
    <property type="project" value="UniProtKB-UniRule"/>
</dbReference>
<dbReference type="GO" id="GO:0004819">
    <property type="term" value="F:glutamine-tRNA ligase activity"/>
    <property type="evidence" value="ECO:0007669"/>
    <property type="project" value="UniProtKB-UniRule"/>
</dbReference>
<dbReference type="GO" id="GO:0006425">
    <property type="term" value="P:glutaminyl-tRNA aminoacylation"/>
    <property type="evidence" value="ECO:0007669"/>
    <property type="project" value="InterPro"/>
</dbReference>
<dbReference type="GO" id="GO:0006424">
    <property type="term" value="P:glutamyl-tRNA aminoacylation"/>
    <property type="evidence" value="ECO:0007669"/>
    <property type="project" value="UniProtKB-UniRule"/>
</dbReference>
<dbReference type="FunFam" id="1.10.1160.10:FF:000001">
    <property type="entry name" value="Glutamine--tRNA ligase"/>
    <property type="match status" value="1"/>
</dbReference>
<dbReference type="FunFam" id="2.40.240.10:FF:000007">
    <property type="entry name" value="Glutamine--tRNA ligase"/>
    <property type="match status" value="1"/>
</dbReference>
<dbReference type="FunFam" id="3.90.800.10:FF:000001">
    <property type="entry name" value="Glutamine--tRNA ligase"/>
    <property type="match status" value="1"/>
</dbReference>
<dbReference type="FunFam" id="3.40.50.620:FF:000037">
    <property type="entry name" value="Glutamine--tRNA ligase cytoplasmic"/>
    <property type="match status" value="1"/>
</dbReference>
<dbReference type="Gene3D" id="1.10.1160.10">
    <property type="entry name" value="Glutamyl-trna Synthetase, Domain 2"/>
    <property type="match status" value="1"/>
</dbReference>
<dbReference type="Gene3D" id="3.90.800.10">
    <property type="entry name" value="Glutamyl-tRNA Synthetase, Domain 3"/>
    <property type="match status" value="1"/>
</dbReference>
<dbReference type="Gene3D" id="3.40.50.620">
    <property type="entry name" value="HUPs"/>
    <property type="match status" value="1"/>
</dbReference>
<dbReference type="Gene3D" id="2.40.240.10">
    <property type="entry name" value="Ribosomal Protein L25, Chain P"/>
    <property type="match status" value="2"/>
</dbReference>
<dbReference type="HAMAP" id="MF_00126">
    <property type="entry name" value="Gln_tRNA_synth"/>
    <property type="match status" value="1"/>
</dbReference>
<dbReference type="InterPro" id="IPR001412">
    <property type="entry name" value="aa-tRNA-synth_I_CS"/>
</dbReference>
<dbReference type="InterPro" id="IPR004514">
    <property type="entry name" value="Gln-tRNA-synth"/>
</dbReference>
<dbReference type="InterPro" id="IPR050132">
    <property type="entry name" value="Gln/Glu-tRNA_Ligase"/>
</dbReference>
<dbReference type="InterPro" id="IPR022861">
    <property type="entry name" value="Gln_tRNA_ligase_bac"/>
</dbReference>
<dbReference type="InterPro" id="IPR000924">
    <property type="entry name" value="Glu/Gln-tRNA-synth"/>
</dbReference>
<dbReference type="InterPro" id="IPR020058">
    <property type="entry name" value="Glu/Gln-tRNA-synth_Ib_cat-dom"/>
</dbReference>
<dbReference type="InterPro" id="IPR020059">
    <property type="entry name" value="Glu/Gln-tRNA-synth_Ib_codon-bd"/>
</dbReference>
<dbReference type="InterPro" id="IPR020061">
    <property type="entry name" value="Glu_tRNA_lig_a-bdl"/>
</dbReference>
<dbReference type="InterPro" id="IPR020056">
    <property type="entry name" value="Rbsml_bL25/Gln-tRNA_synth_N"/>
</dbReference>
<dbReference type="InterPro" id="IPR011035">
    <property type="entry name" value="Ribosomal_bL25/Gln-tRNA_synth"/>
</dbReference>
<dbReference type="InterPro" id="IPR014729">
    <property type="entry name" value="Rossmann-like_a/b/a_fold"/>
</dbReference>
<dbReference type="InterPro" id="IPR049437">
    <property type="entry name" value="tRNA-synt_1c_C2"/>
</dbReference>
<dbReference type="NCBIfam" id="TIGR00440">
    <property type="entry name" value="glnS"/>
    <property type="match status" value="1"/>
</dbReference>
<dbReference type="NCBIfam" id="NF011291">
    <property type="entry name" value="PRK14703.1"/>
    <property type="match status" value="1"/>
</dbReference>
<dbReference type="PANTHER" id="PTHR43097:SF5">
    <property type="entry name" value="GLUTAMATE--TRNA LIGASE"/>
    <property type="match status" value="1"/>
</dbReference>
<dbReference type="PANTHER" id="PTHR43097">
    <property type="entry name" value="GLUTAMINE-TRNA LIGASE"/>
    <property type="match status" value="1"/>
</dbReference>
<dbReference type="Pfam" id="PF00749">
    <property type="entry name" value="tRNA-synt_1c"/>
    <property type="match status" value="1"/>
</dbReference>
<dbReference type="Pfam" id="PF03950">
    <property type="entry name" value="tRNA-synt_1c_C"/>
    <property type="match status" value="1"/>
</dbReference>
<dbReference type="Pfam" id="PF20974">
    <property type="entry name" value="tRNA-synt_1c_C2"/>
    <property type="match status" value="1"/>
</dbReference>
<dbReference type="PRINTS" id="PR00987">
    <property type="entry name" value="TRNASYNTHGLU"/>
</dbReference>
<dbReference type="SUPFAM" id="SSF52374">
    <property type="entry name" value="Nucleotidylyl transferase"/>
    <property type="match status" value="1"/>
</dbReference>
<dbReference type="SUPFAM" id="SSF50715">
    <property type="entry name" value="Ribosomal protein L25-like"/>
    <property type="match status" value="1"/>
</dbReference>
<dbReference type="PROSITE" id="PS00178">
    <property type="entry name" value="AA_TRNA_LIGASE_I"/>
    <property type="match status" value="1"/>
</dbReference>
<protein>
    <recommendedName>
        <fullName evidence="1">Glutamine--tRNA ligase</fullName>
        <ecNumber evidence="1">6.1.1.18</ecNumber>
    </recommendedName>
    <alternativeName>
        <fullName evidence="1">Glutaminyl-tRNA synthetase</fullName>
        <shortName evidence="1">GlnRS</shortName>
    </alternativeName>
</protein>
<sequence length="571" mass="67835">MDTKKEIKNNNFICQIINKDLNENKNLSFYTRFPPEPNGYLHIGHAKSICLNFELASLYKGRCNLRFDDTNPLKENIKYIESIKHDINWLGYKWHGNVRYASEYFLKLYQYAQELIKKGLAYVDHLTKEQIREYRGTLNTPGKNSPYRNRTIQENIELFEKMKKGDFSEGEACLRAKINMSSSSIIMRDPVLYRIIFIKHHQTQNKWCIYPMYDFAHCLSDSIEGITHSLCTLEFQDNKFLYNWILKNTSVKHYPKQYEFSRLNLEFSILSKRKIKILIDKNIIEGWDDPRIPTLSALRRKGYTPSSIKNFCQKIGVTKQNNLIEFSMLEHCIRKELNQTAIRTMAILDPIKIFLYNLDSNYKEEFIVPNHPNNPEMGTHKIIFTNTIYIDRSDFKEKYDKKYKRLKLGEKIRLRYSYIIHAEKIEKDEYGNISNIICYCDLNTLGRKPKDNKNPAVIHWISEKNTLSAEFKLYDQLFNIKNPEQQENFLLYINSKSLIKKFGFIEKKIGEEIQKKISNNNIEIFFQFERIGYFCIDFIDSKKNQLVFNRTVGLRDTWDSKKIKTKNITNN</sequence>
<proteinExistence type="inferred from homology"/>
<comment type="catalytic activity">
    <reaction evidence="1">
        <text>tRNA(Gln) + L-glutamine + ATP = L-glutaminyl-tRNA(Gln) + AMP + diphosphate</text>
        <dbReference type="Rhea" id="RHEA:20121"/>
        <dbReference type="Rhea" id="RHEA-COMP:9662"/>
        <dbReference type="Rhea" id="RHEA-COMP:9681"/>
        <dbReference type="ChEBI" id="CHEBI:30616"/>
        <dbReference type="ChEBI" id="CHEBI:33019"/>
        <dbReference type="ChEBI" id="CHEBI:58359"/>
        <dbReference type="ChEBI" id="CHEBI:78442"/>
        <dbReference type="ChEBI" id="CHEBI:78521"/>
        <dbReference type="ChEBI" id="CHEBI:456215"/>
        <dbReference type="EC" id="6.1.1.18"/>
    </reaction>
</comment>
<comment type="subunit">
    <text evidence="1">Monomer.</text>
</comment>
<comment type="subcellular location">
    <subcellularLocation>
        <location evidence="1">Cytoplasm</location>
    </subcellularLocation>
</comment>
<comment type="similarity">
    <text evidence="1 2">Belongs to the class-I aminoacyl-tRNA synthetase family.</text>
</comment>
<name>SYQ_BUCAI</name>
<keyword id="KW-0030">Aminoacyl-tRNA synthetase</keyword>
<keyword id="KW-0067">ATP-binding</keyword>
<keyword id="KW-0963">Cytoplasm</keyword>
<keyword id="KW-0436">Ligase</keyword>
<keyword id="KW-0547">Nucleotide-binding</keyword>
<keyword id="KW-0648">Protein biosynthesis</keyword>
<keyword id="KW-1185">Reference proteome</keyword>
<feature type="chain" id="PRO_0000195827" description="Glutamine--tRNA ligase">
    <location>
        <begin position="1"/>
        <end position="571"/>
    </location>
</feature>
<feature type="short sequence motif" description="'HIGH' region" evidence="1">
    <location>
        <begin position="35"/>
        <end position="45"/>
    </location>
</feature>
<feature type="short sequence motif" description="'KMSKS' region" evidence="1">
    <location>
        <begin position="269"/>
        <end position="273"/>
    </location>
</feature>
<feature type="binding site" evidence="1">
    <location>
        <begin position="36"/>
        <end position="38"/>
    </location>
    <ligand>
        <name>ATP</name>
        <dbReference type="ChEBI" id="CHEBI:30616"/>
    </ligand>
</feature>
<feature type="binding site" evidence="1">
    <location>
        <begin position="42"/>
        <end position="48"/>
    </location>
    <ligand>
        <name>ATP</name>
        <dbReference type="ChEBI" id="CHEBI:30616"/>
    </ligand>
</feature>
<feature type="binding site" evidence="1">
    <location>
        <position position="68"/>
    </location>
    <ligand>
        <name>L-glutamine</name>
        <dbReference type="ChEBI" id="CHEBI:58359"/>
    </ligand>
</feature>
<feature type="binding site" evidence="1">
    <location>
        <position position="213"/>
    </location>
    <ligand>
        <name>L-glutamine</name>
        <dbReference type="ChEBI" id="CHEBI:58359"/>
    </ligand>
</feature>
<feature type="binding site" evidence="1">
    <location>
        <position position="232"/>
    </location>
    <ligand>
        <name>ATP</name>
        <dbReference type="ChEBI" id="CHEBI:30616"/>
    </ligand>
</feature>
<feature type="binding site" evidence="1">
    <location>
        <begin position="262"/>
        <end position="263"/>
    </location>
    <ligand>
        <name>ATP</name>
        <dbReference type="ChEBI" id="CHEBI:30616"/>
    </ligand>
</feature>
<feature type="binding site" evidence="1">
    <location>
        <begin position="270"/>
        <end position="272"/>
    </location>
    <ligand>
        <name>ATP</name>
        <dbReference type="ChEBI" id="CHEBI:30616"/>
    </ligand>
</feature>
<gene>
    <name evidence="1" type="primary">glnS</name>
    <name type="ordered locus">BU415</name>
</gene>
<evidence type="ECO:0000255" key="1">
    <source>
        <dbReference type="HAMAP-Rule" id="MF_00126"/>
    </source>
</evidence>
<evidence type="ECO:0000305" key="2"/>
<reference key="1">
    <citation type="journal article" date="2000" name="Nature">
        <title>Genome sequence of the endocellular bacterial symbiont of aphids Buchnera sp. APS.</title>
        <authorList>
            <person name="Shigenobu S."/>
            <person name="Watanabe H."/>
            <person name="Hattori M."/>
            <person name="Sakaki Y."/>
            <person name="Ishikawa H."/>
        </authorList>
    </citation>
    <scope>NUCLEOTIDE SEQUENCE [LARGE SCALE GENOMIC DNA]</scope>
    <source>
        <strain>APS</strain>
    </source>
</reference>
<accession>P57490</accession>
<organism>
    <name type="scientific">Buchnera aphidicola subsp. Acyrthosiphon pisum (strain APS)</name>
    <name type="common">Acyrthosiphon pisum symbiotic bacterium</name>
    <dbReference type="NCBI Taxonomy" id="107806"/>
    <lineage>
        <taxon>Bacteria</taxon>
        <taxon>Pseudomonadati</taxon>
        <taxon>Pseudomonadota</taxon>
        <taxon>Gammaproteobacteria</taxon>
        <taxon>Enterobacterales</taxon>
        <taxon>Erwiniaceae</taxon>
        <taxon>Buchnera</taxon>
    </lineage>
</organism>